<name>DF150_ARATH</name>
<evidence type="ECO:0000250" key="1"/>
<evidence type="ECO:0000255" key="2"/>
<evidence type="ECO:0000305" key="3"/>
<gene>
    <name type="primary">LCR32</name>
    <name type="ordered locus">At2g28405</name>
    <name type="ORF">T1B3</name>
</gene>
<proteinExistence type="inferred from homology"/>
<dbReference type="EMBL" id="AC006283">
    <property type="status" value="NOT_ANNOTATED_CDS"/>
    <property type="molecule type" value="Genomic_DNA"/>
</dbReference>
<dbReference type="EMBL" id="CP002685">
    <property type="protein sequence ID" value="AEC08118.1"/>
    <property type="molecule type" value="Genomic_DNA"/>
</dbReference>
<dbReference type="RefSeq" id="NP_001031436.1">
    <property type="nucleotide sequence ID" value="NM_001036359.2"/>
</dbReference>
<dbReference type="SMR" id="P82747"/>
<dbReference type="STRING" id="3702.P82747"/>
<dbReference type="PaxDb" id="3702-AT2G28405.1"/>
<dbReference type="ProteomicsDB" id="224194"/>
<dbReference type="EnsemblPlants" id="AT2G28405.1">
    <property type="protein sequence ID" value="AT2G28405.1"/>
    <property type="gene ID" value="AT2G28405"/>
</dbReference>
<dbReference type="GeneID" id="3768196"/>
<dbReference type="Gramene" id="AT2G28405.1">
    <property type="protein sequence ID" value="AT2G28405.1"/>
    <property type="gene ID" value="AT2G28405"/>
</dbReference>
<dbReference type="KEGG" id="ath:AT2G28405"/>
<dbReference type="Araport" id="AT2G28405"/>
<dbReference type="TAIR" id="AT2G28405">
    <property type="gene designation" value="LCR32"/>
</dbReference>
<dbReference type="HOGENOM" id="CLU_182511_0_0_1"/>
<dbReference type="InParanoid" id="P82747"/>
<dbReference type="OrthoDB" id="10269924at2759"/>
<dbReference type="PhylomeDB" id="P82747"/>
<dbReference type="PRO" id="PR:P82747"/>
<dbReference type="Proteomes" id="UP000006548">
    <property type="component" value="Chromosome 2"/>
</dbReference>
<dbReference type="ExpressionAtlas" id="P82747">
    <property type="expression patterns" value="baseline"/>
</dbReference>
<dbReference type="GO" id="GO:0005576">
    <property type="term" value="C:extracellular region"/>
    <property type="evidence" value="ECO:0007669"/>
    <property type="project" value="UniProtKB-SubCell"/>
</dbReference>
<dbReference type="GO" id="GO:0050832">
    <property type="term" value="P:defense response to fungus"/>
    <property type="evidence" value="ECO:0007669"/>
    <property type="project" value="UniProtKB-KW"/>
</dbReference>
<dbReference type="GO" id="GO:0031640">
    <property type="term" value="P:killing of cells of another organism"/>
    <property type="evidence" value="ECO:0007669"/>
    <property type="project" value="UniProtKB-KW"/>
</dbReference>
<dbReference type="InterPro" id="IPR010851">
    <property type="entry name" value="DEFL"/>
</dbReference>
<dbReference type="PANTHER" id="PTHR33830:SF38">
    <property type="entry name" value="DEFENSIN-LIKE PROTEIN 153-RELATED"/>
    <property type="match status" value="1"/>
</dbReference>
<dbReference type="PANTHER" id="PTHR33830">
    <property type="entry name" value="DEFENSIN-LIKE PROTEIN 184-RELATED"/>
    <property type="match status" value="1"/>
</dbReference>
<dbReference type="Pfam" id="PF07333">
    <property type="entry name" value="SLR1-BP"/>
    <property type="match status" value="1"/>
</dbReference>
<keyword id="KW-0929">Antimicrobial</keyword>
<keyword id="KW-1015">Disulfide bond</keyword>
<keyword id="KW-0295">Fungicide</keyword>
<keyword id="KW-0611">Plant defense</keyword>
<keyword id="KW-1185">Reference proteome</keyword>
<keyword id="KW-0964">Secreted</keyword>
<keyword id="KW-0732">Signal</keyword>
<sequence>MMGKHIQLSFAILIMFTIFVLGAVGDVDQGYKQQCYKTIDVNLCVTGECKKMCVRRFKQAAGMCIKSVPSAPAPNRCRCIYHC</sequence>
<comment type="subcellular location">
    <subcellularLocation>
        <location evidence="1">Secreted</location>
    </subcellularLocation>
</comment>
<comment type="similarity">
    <text evidence="3">Belongs to the DEFL family.</text>
</comment>
<organism evidence="3">
    <name type="scientific">Arabidopsis thaliana</name>
    <name type="common">Mouse-ear cress</name>
    <dbReference type="NCBI Taxonomy" id="3702"/>
    <lineage>
        <taxon>Eukaryota</taxon>
        <taxon>Viridiplantae</taxon>
        <taxon>Streptophyta</taxon>
        <taxon>Embryophyta</taxon>
        <taxon>Tracheophyta</taxon>
        <taxon>Spermatophyta</taxon>
        <taxon>Magnoliopsida</taxon>
        <taxon>eudicotyledons</taxon>
        <taxon>Gunneridae</taxon>
        <taxon>Pentapetalae</taxon>
        <taxon>rosids</taxon>
        <taxon>malvids</taxon>
        <taxon>Brassicales</taxon>
        <taxon>Brassicaceae</taxon>
        <taxon>Camelineae</taxon>
        <taxon>Arabidopsis</taxon>
    </lineage>
</organism>
<reference evidence="3" key="1">
    <citation type="journal article" date="1999" name="Nature">
        <title>Sequence and analysis of chromosome 2 of the plant Arabidopsis thaliana.</title>
        <authorList>
            <person name="Lin X."/>
            <person name="Kaul S."/>
            <person name="Rounsley S.D."/>
            <person name="Shea T.P."/>
            <person name="Benito M.-I."/>
            <person name="Town C.D."/>
            <person name="Fujii C.Y."/>
            <person name="Mason T.M."/>
            <person name="Bowman C.L."/>
            <person name="Barnstead M.E."/>
            <person name="Feldblyum T.V."/>
            <person name="Buell C.R."/>
            <person name="Ketchum K.A."/>
            <person name="Lee J.J."/>
            <person name="Ronning C.M."/>
            <person name="Koo H.L."/>
            <person name="Moffat K.S."/>
            <person name="Cronin L.A."/>
            <person name="Shen M."/>
            <person name="Pai G."/>
            <person name="Van Aken S."/>
            <person name="Umayam L."/>
            <person name="Tallon L.J."/>
            <person name="Gill J.E."/>
            <person name="Adams M.D."/>
            <person name="Carrera A.J."/>
            <person name="Creasy T.H."/>
            <person name="Goodman H.M."/>
            <person name="Somerville C.R."/>
            <person name="Copenhaver G.P."/>
            <person name="Preuss D."/>
            <person name="Nierman W.C."/>
            <person name="White O."/>
            <person name="Eisen J.A."/>
            <person name="Salzberg S.L."/>
            <person name="Fraser C.M."/>
            <person name="Venter J.C."/>
        </authorList>
    </citation>
    <scope>NUCLEOTIDE SEQUENCE [LARGE SCALE GENOMIC DNA]</scope>
    <source>
        <strain>cv. Columbia</strain>
    </source>
</reference>
<reference key="2">
    <citation type="journal article" date="2017" name="Plant J.">
        <title>Araport11: a complete reannotation of the Arabidopsis thaliana reference genome.</title>
        <authorList>
            <person name="Cheng C.Y."/>
            <person name="Krishnakumar V."/>
            <person name="Chan A.P."/>
            <person name="Thibaud-Nissen F."/>
            <person name="Schobel S."/>
            <person name="Town C.D."/>
        </authorList>
    </citation>
    <scope>GENOME REANNOTATION</scope>
    <source>
        <strain>cv. Columbia</strain>
    </source>
</reference>
<reference evidence="3" key="3">
    <citation type="journal article" date="2001" name="Plant Mol. Biol.">
        <title>Two large Arabidopsis thaliana gene families are homologous to the Brassica gene superfamily that encodes pollen coat proteins and the male component of the self-incompatibility response.</title>
        <authorList>
            <person name="Vanoosthuyse V."/>
            <person name="Miege C."/>
            <person name="Dumas C."/>
            <person name="Cock J.M."/>
        </authorList>
    </citation>
    <scope>IDENTIFICATION</scope>
</reference>
<reference key="4">
    <citation type="journal article" date="2005" name="Plant Physiol.">
        <title>Genome organization of more than 300 defensin-like genes in Arabidopsis.</title>
        <authorList>
            <person name="Silverstein K.A.T."/>
            <person name="Graham M.A."/>
            <person name="Paape T.D."/>
            <person name="VandenBosch K.A."/>
        </authorList>
    </citation>
    <scope>GENE FAMILY</scope>
</reference>
<feature type="signal peptide" evidence="2">
    <location>
        <begin position="1"/>
        <end position="25"/>
    </location>
</feature>
<feature type="chain" id="PRO_0000017271" description="Putative defensin-like protein 150">
    <location>
        <begin position="26"/>
        <end position="83"/>
    </location>
</feature>
<feature type="disulfide bond" evidence="1">
    <location>
        <begin position="35"/>
        <end position="83"/>
    </location>
</feature>
<feature type="disulfide bond" evidence="1">
    <location>
        <begin position="44"/>
        <end position="64"/>
    </location>
</feature>
<feature type="disulfide bond" evidence="1">
    <location>
        <begin position="49"/>
        <end position="77"/>
    </location>
</feature>
<feature type="disulfide bond" evidence="1">
    <location>
        <begin position="53"/>
        <end position="79"/>
    </location>
</feature>
<accession>P82747</accession>
<protein>
    <recommendedName>
        <fullName>Putative defensin-like protein 150</fullName>
    </recommendedName>
    <alternativeName>
        <fullName>Putative low-molecular-weight cysteine-rich protein 32</fullName>
        <shortName>Protein LCR32</shortName>
    </alternativeName>
</protein>